<protein>
    <recommendedName>
        <fullName evidence="1">Cobalt-precorrin-5B C(1)-methyltransferase</fullName>
        <ecNumber evidence="1">2.1.1.195</ecNumber>
    </recommendedName>
    <alternativeName>
        <fullName evidence="1">Cobalt-precorrin-6A synthase</fullName>
    </alternativeName>
</protein>
<keyword id="KW-0169">Cobalamin biosynthesis</keyword>
<keyword id="KW-0489">Methyltransferase</keyword>
<keyword id="KW-0949">S-adenosyl-L-methionine</keyword>
<keyword id="KW-0808">Transferase</keyword>
<accession>A2BTY3</accession>
<name>CBID_PROM5</name>
<gene>
    <name evidence="1" type="primary">cbiD</name>
    <name type="ordered locus">P9515_00351</name>
</gene>
<reference key="1">
    <citation type="journal article" date="2007" name="PLoS Genet.">
        <title>Patterns and implications of gene gain and loss in the evolution of Prochlorococcus.</title>
        <authorList>
            <person name="Kettler G.C."/>
            <person name="Martiny A.C."/>
            <person name="Huang K."/>
            <person name="Zucker J."/>
            <person name="Coleman M.L."/>
            <person name="Rodrigue S."/>
            <person name="Chen F."/>
            <person name="Lapidus A."/>
            <person name="Ferriera S."/>
            <person name="Johnson J."/>
            <person name="Steglich C."/>
            <person name="Church G.M."/>
            <person name="Richardson P."/>
            <person name="Chisholm S.W."/>
        </authorList>
    </citation>
    <scope>NUCLEOTIDE SEQUENCE [LARGE SCALE GENOMIC DNA]</scope>
    <source>
        <strain>MIT 9515</strain>
    </source>
</reference>
<organism>
    <name type="scientific">Prochlorococcus marinus (strain MIT 9515)</name>
    <dbReference type="NCBI Taxonomy" id="167542"/>
    <lineage>
        <taxon>Bacteria</taxon>
        <taxon>Bacillati</taxon>
        <taxon>Cyanobacteriota</taxon>
        <taxon>Cyanophyceae</taxon>
        <taxon>Synechococcales</taxon>
        <taxon>Prochlorococcaceae</taxon>
        <taxon>Prochlorococcus</taxon>
    </lineage>
</organism>
<dbReference type="EC" id="2.1.1.195" evidence="1"/>
<dbReference type="EMBL" id="CP000552">
    <property type="protein sequence ID" value="ABM71244.1"/>
    <property type="molecule type" value="Genomic_DNA"/>
</dbReference>
<dbReference type="RefSeq" id="WP_011819361.1">
    <property type="nucleotide sequence ID" value="NC_008817.1"/>
</dbReference>
<dbReference type="SMR" id="A2BTY3"/>
<dbReference type="STRING" id="167542.P9515_00351"/>
<dbReference type="GeneID" id="60201007"/>
<dbReference type="KEGG" id="pmc:P9515_00351"/>
<dbReference type="eggNOG" id="COG1903">
    <property type="taxonomic scope" value="Bacteria"/>
</dbReference>
<dbReference type="HOGENOM" id="CLU_041273_1_2_3"/>
<dbReference type="OrthoDB" id="6439987at2"/>
<dbReference type="UniPathway" id="UPA00148">
    <property type="reaction ID" value="UER00227"/>
</dbReference>
<dbReference type="Proteomes" id="UP000001589">
    <property type="component" value="Chromosome"/>
</dbReference>
<dbReference type="GO" id="GO:0043780">
    <property type="term" value="F:cobalt-precorrin-5B C1-methyltransferase activity"/>
    <property type="evidence" value="ECO:0007669"/>
    <property type="project" value="RHEA"/>
</dbReference>
<dbReference type="GO" id="GO:0019251">
    <property type="term" value="P:anaerobic cobalamin biosynthetic process"/>
    <property type="evidence" value="ECO:0007669"/>
    <property type="project" value="UniProtKB-UniRule"/>
</dbReference>
<dbReference type="GO" id="GO:0032259">
    <property type="term" value="P:methylation"/>
    <property type="evidence" value="ECO:0007669"/>
    <property type="project" value="UniProtKB-KW"/>
</dbReference>
<dbReference type="Gene3D" id="3.30.2110.10">
    <property type="entry name" value="CbiD-like"/>
    <property type="match status" value="1"/>
</dbReference>
<dbReference type="HAMAP" id="MF_00787">
    <property type="entry name" value="CbiD"/>
    <property type="match status" value="1"/>
</dbReference>
<dbReference type="InterPro" id="IPR002748">
    <property type="entry name" value="CbiD"/>
</dbReference>
<dbReference type="InterPro" id="IPR036074">
    <property type="entry name" value="CbiD_sf"/>
</dbReference>
<dbReference type="NCBIfam" id="TIGR00312">
    <property type="entry name" value="cbiD"/>
    <property type="match status" value="1"/>
</dbReference>
<dbReference type="PANTHER" id="PTHR35863">
    <property type="entry name" value="COBALT-PRECORRIN-5B C(1)-METHYLTRANSFERASE"/>
    <property type="match status" value="1"/>
</dbReference>
<dbReference type="PANTHER" id="PTHR35863:SF1">
    <property type="entry name" value="COBALT-PRECORRIN-5B C(1)-METHYLTRANSFERASE"/>
    <property type="match status" value="1"/>
</dbReference>
<dbReference type="Pfam" id="PF01888">
    <property type="entry name" value="CbiD"/>
    <property type="match status" value="1"/>
</dbReference>
<dbReference type="PIRSF" id="PIRSF026782">
    <property type="entry name" value="CbiD"/>
    <property type="match status" value="1"/>
</dbReference>
<dbReference type="SUPFAM" id="SSF111342">
    <property type="entry name" value="CbiD-like"/>
    <property type="match status" value="1"/>
</dbReference>
<feature type="chain" id="PRO_1000046873" description="Cobalt-precorrin-5B C(1)-methyltransferase">
    <location>
        <begin position="1"/>
        <end position="372"/>
    </location>
</feature>
<sequence length="372" mass="41397">MKKGFSLPLWVTGAAKSAVKKLTGLPFEDYELIKIPNDKNLIKIKVHSAGLIKDESHALGISFADSGLDLDVTQNLEIWTIAFLEKTYEKDNNSLDLINIIPGYGVGIDQKTSEICISKFAKEVLFENLLEILPAGYKLNLEIIFPNGKFLAERTSNQSFGIVQGLSIIGTSAETFSSASPDQLKNAKAQLEKIVSHDFYETIIFVIGENGLHLAKSSNIKFPIIKVGNWIGPLLVDAALKKIKRVILFGYHGKLIKLAGGIFHTHNHLADARIEILVYLAVKEEVPIEMIKKLSLASNVEDALLLLESSSPSLADKLWNKLSDTVEKRSSEYLKRYITTDMKVAAIIFDRQRKIRWSGDNGKDYISSFKGF</sequence>
<comment type="function">
    <text evidence="1">Catalyzes the methylation of C-1 in cobalt-precorrin-5B to form cobalt-precorrin-6A.</text>
</comment>
<comment type="catalytic activity">
    <reaction evidence="1">
        <text>Co-precorrin-5B + S-adenosyl-L-methionine = Co-precorrin-6A + S-adenosyl-L-homocysteine</text>
        <dbReference type="Rhea" id="RHEA:26285"/>
        <dbReference type="ChEBI" id="CHEBI:57856"/>
        <dbReference type="ChEBI" id="CHEBI:59789"/>
        <dbReference type="ChEBI" id="CHEBI:60063"/>
        <dbReference type="ChEBI" id="CHEBI:60064"/>
        <dbReference type="EC" id="2.1.1.195"/>
    </reaction>
</comment>
<comment type="pathway">
    <text evidence="1">Cofactor biosynthesis; adenosylcobalamin biosynthesis; cob(II)yrinate a,c-diamide from sirohydrochlorin (anaerobic route): step 6/10.</text>
</comment>
<comment type="similarity">
    <text evidence="1">Belongs to the CbiD family.</text>
</comment>
<evidence type="ECO:0000255" key="1">
    <source>
        <dbReference type="HAMAP-Rule" id="MF_00787"/>
    </source>
</evidence>
<proteinExistence type="inferred from homology"/>